<reference key="1">
    <citation type="submission" date="2005-09" db="EMBL/GenBank/DDBJ databases">
        <title>Complete genome sequence of Clostridium kluyveri and comparative genomics of Clostridia species.</title>
        <authorList>
            <person name="Inui M."/>
            <person name="Nonaka H."/>
            <person name="Shinoda Y."/>
            <person name="Ikenaga Y."/>
            <person name="Abe M."/>
            <person name="Naito K."/>
            <person name="Vertes A.A."/>
            <person name="Yukawa H."/>
        </authorList>
    </citation>
    <scope>NUCLEOTIDE SEQUENCE [LARGE SCALE GENOMIC DNA]</scope>
    <source>
        <strain>NBRC 12016</strain>
    </source>
</reference>
<accession>B9E1X2</accession>
<gene>
    <name evidence="1" type="primary">argB</name>
    <name type="ordered locus">CKR_1446</name>
</gene>
<proteinExistence type="inferred from homology"/>
<dbReference type="EC" id="2.7.2.8" evidence="1"/>
<dbReference type="EMBL" id="AP009049">
    <property type="protein sequence ID" value="BAH06497.1"/>
    <property type="molecule type" value="Genomic_DNA"/>
</dbReference>
<dbReference type="RefSeq" id="WP_012101947.1">
    <property type="nucleotide sequence ID" value="NC_011837.1"/>
</dbReference>
<dbReference type="SMR" id="B9E1X2"/>
<dbReference type="KEGG" id="ckr:CKR_1446"/>
<dbReference type="HOGENOM" id="CLU_053680_0_0_9"/>
<dbReference type="UniPathway" id="UPA00068">
    <property type="reaction ID" value="UER00107"/>
</dbReference>
<dbReference type="Proteomes" id="UP000007969">
    <property type="component" value="Chromosome"/>
</dbReference>
<dbReference type="GO" id="GO:0005737">
    <property type="term" value="C:cytoplasm"/>
    <property type="evidence" value="ECO:0007669"/>
    <property type="project" value="UniProtKB-SubCell"/>
</dbReference>
<dbReference type="GO" id="GO:0003991">
    <property type="term" value="F:acetylglutamate kinase activity"/>
    <property type="evidence" value="ECO:0007669"/>
    <property type="project" value="UniProtKB-UniRule"/>
</dbReference>
<dbReference type="GO" id="GO:0005524">
    <property type="term" value="F:ATP binding"/>
    <property type="evidence" value="ECO:0007669"/>
    <property type="project" value="UniProtKB-UniRule"/>
</dbReference>
<dbReference type="GO" id="GO:0042450">
    <property type="term" value="P:arginine biosynthetic process via ornithine"/>
    <property type="evidence" value="ECO:0007669"/>
    <property type="project" value="UniProtKB-UniRule"/>
</dbReference>
<dbReference type="GO" id="GO:0006526">
    <property type="term" value="P:L-arginine biosynthetic process"/>
    <property type="evidence" value="ECO:0007669"/>
    <property type="project" value="UniProtKB-UniPathway"/>
</dbReference>
<dbReference type="CDD" id="cd04250">
    <property type="entry name" value="AAK_NAGK-C"/>
    <property type="match status" value="1"/>
</dbReference>
<dbReference type="FunFam" id="3.40.1160.10:FF:000004">
    <property type="entry name" value="Acetylglutamate kinase"/>
    <property type="match status" value="1"/>
</dbReference>
<dbReference type="Gene3D" id="3.40.1160.10">
    <property type="entry name" value="Acetylglutamate kinase-like"/>
    <property type="match status" value="1"/>
</dbReference>
<dbReference type="HAMAP" id="MF_00082">
    <property type="entry name" value="ArgB"/>
    <property type="match status" value="1"/>
</dbReference>
<dbReference type="InterPro" id="IPR036393">
    <property type="entry name" value="AceGlu_kinase-like_sf"/>
</dbReference>
<dbReference type="InterPro" id="IPR004662">
    <property type="entry name" value="AcgluKinase_fam"/>
</dbReference>
<dbReference type="InterPro" id="IPR037528">
    <property type="entry name" value="ArgB"/>
</dbReference>
<dbReference type="InterPro" id="IPR001048">
    <property type="entry name" value="Asp/Glu/Uridylate_kinase"/>
</dbReference>
<dbReference type="InterPro" id="IPR001057">
    <property type="entry name" value="Glu/AcGlu_kinase"/>
</dbReference>
<dbReference type="InterPro" id="IPR041727">
    <property type="entry name" value="NAGK-C"/>
</dbReference>
<dbReference type="NCBIfam" id="TIGR00761">
    <property type="entry name" value="argB"/>
    <property type="match status" value="1"/>
</dbReference>
<dbReference type="PANTHER" id="PTHR23342">
    <property type="entry name" value="N-ACETYLGLUTAMATE SYNTHASE"/>
    <property type="match status" value="1"/>
</dbReference>
<dbReference type="PANTHER" id="PTHR23342:SF0">
    <property type="entry name" value="N-ACETYLGLUTAMATE SYNTHASE, MITOCHONDRIAL"/>
    <property type="match status" value="1"/>
</dbReference>
<dbReference type="Pfam" id="PF00696">
    <property type="entry name" value="AA_kinase"/>
    <property type="match status" value="1"/>
</dbReference>
<dbReference type="PIRSF" id="PIRSF000728">
    <property type="entry name" value="NAGK"/>
    <property type="match status" value="1"/>
</dbReference>
<dbReference type="PRINTS" id="PR00474">
    <property type="entry name" value="GLU5KINASE"/>
</dbReference>
<dbReference type="SUPFAM" id="SSF53633">
    <property type="entry name" value="Carbamate kinase-like"/>
    <property type="match status" value="1"/>
</dbReference>
<organism>
    <name type="scientific">Clostridium kluyveri (strain NBRC 12016)</name>
    <dbReference type="NCBI Taxonomy" id="583346"/>
    <lineage>
        <taxon>Bacteria</taxon>
        <taxon>Bacillati</taxon>
        <taxon>Bacillota</taxon>
        <taxon>Clostridia</taxon>
        <taxon>Eubacteriales</taxon>
        <taxon>Clostridiaceae</taxon>
        <taxon>Clostridium</taxon>
    </lineage>
</organism>
<name>ARGB_CLOK1</name>
<sequence>MNYNEVAKILAESLPYIQKYRGKTIVVKYGGSAMLDEQLKKYVINDLVLMKCVGINLVVVHGGGPFISSYLKKLNKESVFIDGLRYTDEETMDVVQMVLSGKVNKDLVKLIQSYGGKALGLCGIDGAMIKAEKISKGVDLGKVGEITDINTEIIISSIDNGYIPVISSIALGDDNETYNINADTCTFKIAAALKAQNLILLTDVPGVMRDMDDNSTLISELRLKDIKALYEDNIIKGGMLPKINCCVEAIKSGVKSAHIIDGRVPHCLLVELFSKEGIGTMIY</sequence>
<feature type="chain" id="PRO_1000118348" description="Acetylglutamate kinase">
    <location>
        <begin position="1"/>
        <end position="283"/>
    </location>
</feature>
<feature type="binding site" evidence="1">
    <location>
        <begin position="63"/>
        <end position="64"/>
    </location>
    <ligand>
        <name>substrate</name>
    </ligand>
</feature>
<feature type="binding site" evidence="1">
    <location>
        <position position="85"/>
    </location>
    <ligand>
        <name>substrate</name>
    </ligand>
</feature>
<feature type="binding site" evidence="1">
    <location>
        <position position="179"/>
    </location>
    <ligand>
        <name>substrate</name>
    </ligand>
</feature>
<feature type="site" description="Transition state stabilizer" evidence="1">
    <location>
        <position position="28"/>
    </location>
</feature>
<feature type="site" description="Transition state stabilizer" evidence="1">
    <location>
        <position position="242"/>
    </location>
</feature>
<evidence type="ECO:0000255" key="1">
    <source>
        <dbReference type="HAMAP-Rule" id="MF_00082"/>
    </source>
</evidence>
<keyword id="KW-0028">Amino-acid biosynthesis</keyword>
<keyword id="KW-0055">Arginine biosynthesis</keyword>
<keyword id="KW-0067">ATP-binding</keyword>
<keyword id="KW-0963">Cytoplasm</keyword>
<keyword id="KW-0418">Kinase</keyword>
<keyword id="KW-0547">Nucleotide-binding</keyword>
<keyword id="KW-0808">Transferase</keyword>
<comment type="function">
    <text evidence="1">Catalyzes the ATP-dependent phosphorylation of N-acetyl-L-glutamate.</text>
</comment>
<comment type="catalytic activity">
    <reaction evidence="1">
        <text>N-acetyl-L-glutamate + ATP = N-acetyl-L-glutamyl 5-phosphate + ADP</text>
        <dbReference type="Rhea" id="RHEA:14629"/>
        <dbReference type="ChEBI" id="CHEBI:30616"/>
        <dbReference type="ChEBI" id="CHEBI:44337"/>
        <dbReference type="ChEBI" id="CHEBI:57936"/>
        <dbReference type="ChEBI" id="CHEBI:456216"/>
        <dbReference type="EC" id="2.7.2.8"/>
    </reaction>
</comment>
<comment type="pathway">
    <text evidence="1">Amino-acid biosynthesis; L-arginine biosynthesis; N(2)-acetyl-L-ornithine from L-glutamate: step 2/4.</text>
</comment>
<comment type="subcellular location">
    <subcellularLocation>
        <location evidence="1">Cytoplasm</location>
    </subcellularLocation>
</comment>
<comment type="similarity">
    <text evidence="1">Belongs to the acetylglutamate kinase family. ArgB subfamily.</text>
</comment>
<protein>
    <recommendedName>
        <fullName evidence="1">Acetylglutamate kinase</fullName>
        <ecNumber evidence="1">2.7.2.8</ecNumber>
    </recommendedName>
    <alternativeName>
        <fullName evidence="1">N-acetyl-L-glutamate 5-phosphotransferase</fullName>
    </alternativeName>
    <alternativeName>
        <fullName evidence="1">NAG kinase</fullName>
        <shortName evidence="1">NAGK</shortName>
    </alternativeName>
</protein>